<evidence type="ECO:0000269" key="1">
    <source ref="1"/>
</evidence>
<evidence type="ECO:0000269" key="2">
    <source ref="2"/>
</evidence>
<evidence type="ECO:0000305" key="3"/>
<accession>P85029</accession>
<name>F134_CTEON</name>
<keyword id="KW-0903">Direct protein sequencing</keyword>
<keyword id="KW-0964">Secreted</keyword>
<sequence length="27" mass="3026">ITFSKIYRSCKSDSDCGNQKCARGRCV</sequence>
<feature type="peptide" id="PRO_0000260048" description="U18-ctenitoxin-Co1a">
    <location>
        <begin position="1"/>
        <end position="27"/>
    </location>
</feature>
<feature type="peptide" id="PRO_0000300247" description="Venom peptide Oc F7-3">
    <location>
        <begin position="4"/>
        <end position="27"/>
    </location>
</feature>
<reference evidence="3" key="1">
    <citation type="submission" date="2006-10" db="UniProtKB">
        <title>New 3kDa protein from venom of spider Oligoctenus ornatus.</title>
        <authorList>
            <person name="Richardson M."/>
            <person name="Borges M.H."/>
            <person name="Goncalves J.M."/>
            <person name="Resende F.F."/>
            <person name="Oliveira C.F.B."/>
            <person name="Rates B.A."/>
            <person name="Bemquerer M.P."/>
            <person name="Pimenta A.M.C."/>
            <person name="Cordeiro M.N."/>
        </authorList>
    </citation>
    <scope>PROTEIN SEQUENCE</scope>
    <scope>SUBCELLULAR LOCATION</scope>
    <scope>TISSUE SPECIFICITY</scope>
    <scope>MASS SPECTROMETRY</scope>
    <source>
        <tissue evidence="1">Venom</tissue>
    </source>
</reference>
<reference evidence="3" key="2">
    <citation type="submission" date="2007-07" db="UniProtKB">
        <authorList>
            <person name="Bemquerer M.P."/>
            <person name="Oliveira C.F.B."/>
            <person name="Goncalves J.M."/>
            <person name="Rates B."/>
            <person name="Santos D.M."/>
            <person name="Pimenta A.M.C."/>
            <person name="Cordeiro M.N."/>
            <person name="Rates M."/>
        </authorList>
    </citation>
    <scope>PROTEIN SEQUENCE OF 4-27</scope>
    <scope>SUBCELLULAR LOCATION</scope>
    <scope>TISSUE SPECIFICITY</scope>
    <scope>MASS SPECTROMETRY</scope>
    <source>
        <tissue>Venom</tissue>
    </source>
</reference>
<organism>
    <name type="scientific">Ctenus ornatus</name>
    <name type="common">Brazilian spider</name>
    <name type="synonym">Oligoctenus ornatus</name>
    <dbReference type="NCBI Taxonomy" id="406443"/>
    <lineage>
        <taxon>Eukaryota</taxon>
        <taxon>Metazoa</taxon>
        <taxon>Ecdysozoa</taxon>
        <taxon>Arthropoda</taxon>
        <taxon>Chelicerata</taxon>
        <taxon>Arachnida</taxon>
        <taxon>Araneae</taxon>
        <taxon>Araneomorphae</taxon>
        <taxon>Entelegynae</taxon>
        <taxon>Lycosoidea</taxon>
        <taxon>Ctenidae</taxon>
        <taxon>Oligoctenus</taxon>
    </lineage>
</organism>
<comment type="function">
    <text evidence="1">Not toxic to mice by intracerebroventricular injection.</text>
</comment>
<comment type="subcellular location">
    <subcellularLocation>
        <location evidence="1 2">Secreted</location>
    </subcellularLocation>
</comment>
<comment type="tissue specificity">
    <text evidence="1 2">Expressed by the venom gland.</text>
</comment>
<comment type="mass spectrometry" mass="3034.01" method="Electrospray" evidence="1">
    <molecule>U18-ctenitoxin-Co1a</molecule>
</comment>
<comment type="mass spectrometry" mass="2659.9" error="0.44" method="Electrospray" evidence="2">
    <molecule>Venom peptide Oc F7-3</molecule>
</comment>
<comment type="similarity">
    <text>Belongs to the u18-CNTX family.</text>
</comment>
<dbReference type="ArachnoServer" id="AS000002">
    <property type="toxin name" value="U18-ctenitoxin-Co1a"/>
</dbReference>
<dbReference type="GO" id="GO:0005576">
    <property type="term" value="C:extracellular region"/>
    <property type="evidence" value="ECO:0007669"/>
    <property type="project" value="UniProtKB-SubCell"/>
</dbReference>
<protein>
    <recommendedName>
        <fullName>U18-ctenitoxin-Co1a</fullName>
        <shortName>U18-CNTX-Co1a</shortName>
    </recommendedName>
    <alternativeName>
        <fullName>Venom peptide F13-4</fullName>
    </alternativeName>
    <component>
        <recommendedName>
            <fullName>Venom peptide Oc F7-3</fullName>
        </recommendedName>
    </component>
</protein>
<proteinExistence type="evidence at protein level"/>